<evidence type="ECO:0000305" key="1"/>
<organism>
    <name type="scientific">Synechococcus sp</name>
    <dbReference type="NCBI Taxonomy" id="1131"/>
    <lineage>
        <taxon>Bacteria</taxon>
        <taxon>Bacillati</taxon>
        <taxon>Cyanobacteriota</taxon>
        <taxon>Cyanophyceae</taxon>
        <taxon>Synechococcales</taxon>
        <taxon>Synechococcaceae</taxon>
        <taxon>Synechococcus</taxon>
    </lineage>
</organism>
<dbReference type="SMR" id="P08002"/>
<dbReference type="GO" id="GO:0046872">
    <property type="term" value="F:metal ion binding"/>
    <property type="evidence" value="ECO:0007669"/>
    <property type="project" value="UniProtKB-KW"/>
</dbReference>
<dbReference type="Gene3D" id="2.30.170.10">
    <property type="match status" value="1"/>
</dbReference>
<dbReference type="InterPro" id="IPR017854">
    <property type="entry name" value="Metalthion_dom_sf"/>
</dbReference>
<dbReference type="InterPro" id="IPR000518">
    <property type="entry name" value="Metalthion_fam14_prok"/>
</dbReference>
<dbReference type="Pfam" id="PF02069">
    <property type="entry name" value="Metallothio_Pro"/>
    <property type="match status" value="1"/>
</dbReference>
<dbReference type="PRINTS" id="PR00859">
    <property type="entry name" value="MTPROKARYOTE"/>
</dbReference>
<dbReference type="SUPFAM" id="SSF57868">
    <property type="entry name" value="Metallothionein"/>
    <property type="match status" value="1"/>
</dbReference>
<name>MT_SYNSP</name>
<feature type="chain" id="PRO_0000197372" description="Metallothionein">
    <location>
        <begin position="1"/>
        <end position="53"/>
    </location>
</feature>
<keyword id="KW-0104">Cadmium</keyword>
<keyword id="KW-0186">Copper</keyword>
<keyword id="KW-0903">Direct protein sequencing</keyword>
<keyword id="KW-0479">Metal-binding</keyword>
<keyword id="KW-0480">Metal-thiolate cluster</keyword>
<keyword id="KW-0862">Zinc</keyword>
<accession>P08002</accession>
<proteinExistence type="evidence at protein level"/>
<sequence length="53" mass="5432">TSTTLVKCACEPCLCNVDPSKAIDRNGLYYCCEACADGHTGGSKGCGHTGCNC</sequence>
<comment type="function">
    <text>This protein complexes cadmium, zinc and copper.</text>
</comment>
<comment type="similarity">
    <text evidence="1">Belongs to the metallothionein superfamily. Type 14 family.</text>
</comment>
<protein>
    <recommendedName>
        <fullName>Metallothionein</fullName>
        <shortName>MT</shortName>
    </recommendedName>
</protein>
<reference key="1">
    <citation type="journal article" date="1988" name="Biochem. J.">
        <title>Primary- and secondary-structural analysis of a unique prokaryotic metallothionein from a Synechococcus sp. cyanobacterium.</title>
        <authorList>
            <person name="Olafson R.W."/>
            <person name="McCubbin W.D."/>
            <person name="Kay C.M."/>
        </authorList>
    </citation>
    <scope>PROTEIN SEQUENCE</scope>
    <source>
        <strain>TX-20</strain>
    </source>
</reference>
<reference key="2">
    <citation type="journal article" date="1984" name="Int. J. Pept. Protein Res.">
        <title>Prokaryotic metallothionein. Amino terminal sequence analysis of a unique metallothionein.</title>
        <authorList>
            <person name="Olafson R.W."/>
        </authorList>
    </citation>
    <scope>PROTEIN SEQUENCE OF 1-24</scope>
</reference>